<name>TERS_BPT4</name>
<organism>
    <name type="scientific">Enterobacteria phage T4</name>
    <name type="common">Bacteriophage T4</name>
    <dbReference type="NCBI Taxonomy" id="10665"/>
    <lineage>
        <taxon>Viruses</taxon>
        <taxon>Duplodnaviria</taxon>
        <taxon>Heunggongvirae</taxon>
        <taxon>Uroviricota</taxon>
        <taxon>Caudoviricetes</taxon>
        <taxon>Straboviridae</taxon>
        <taxon>Tevenvirinae</taxon>
        <taxon>Tequatrovirus</taxon>
    </lineage>
</organism>
<feature type="chain" id="PRO_0000165006" description="Terminase, small subunit">
    <location>
        <begin position="1"/>
        <end position="164"/>
    </location>
</feature>
<feature type="region of interest" description="Helix-turn-helix (HTH)" evidence="2 5">
    <location>
        <begin position="1"/>
        <end position="35"/>
    </location>
</feature>
<feature type="region of interest" description="Interaction with gp17" evidence="2">
    <location>
        <begin position="1"/>
        <end position="35"/>
    </location>
</feature>
<feature type="region of interest" description="Oligomerization" evidence="2">
    <location>
        <begin position="36"/>
        <end position="114"/>
    </location>
</feature>
<feature type="region of interest" description="Interaction with gp17" evidence="2">
    <location>
        <begin position="115"/>
        <end position="164"/>
    </location>
</feature>
<dbReference type="EMBL" id="X52394">
    <property type="protein sequence ID" value="CAA36640.1"/>
    <property type="molecule type" value="Genomic_DNA"/>
</dbReference>
<dbReference type="EMBL" id="AF158101">
    <property type="protein sequence ID" value="AAD42421.1"/>
    <property type="molecule type" value="Genomic_DNA"/>
</dbReference>
<dbReference type="PIR" id="JU0286">
    <property type="entry name" value="GSBPT4"/>
</dbReference>
<dbReference type="RefSeq" id="NP_049775.1">
    <property type="nucleotide sequence ID" value="NC_000866.4"/>
</dbReference>
<dbReference type="SMR" id="P17311"/>
<dbReference type="DIP" id="DIP-60321N"/>
<dbReference type="IntAct" id="P17311">
    <property type="interactions" value="1"/>
</dbReference>
<dbReference type="GeneID" id="1258811"/>
<dbReference type="KEGG" id="vg:1258811"/>
<dbReference type="OrthoDB" id="13191at10239"/>
<dbReference type="Proteomes" id="UP000009087">
    <property type="component" value="Segment"/>
</dbReference>
<dbReference type="GO" id="GO:0043493">
    <property type="term" value="C:viral terminase complex"/>
    <property type="evidence" value="ECO:0000314"/>
    <property type="project" value="UniProtKB"/>
</dbReference>
<dbReference type="GO" id="GO:0003677">
    <property type="term" value="F:DNA binding"/>
    <property type="evidence" value="ECO:0007669"/>
    <property type="project" value="UniProtKB-KW"/>
</dbReference>
<dbReference type="FunFam" id="1.10.287.1060:FF:000005">
    <property type="entry name" value="Phage terminase, small subunit"/>
    <property type="match status" value="1"/>
</dbReference>
<dbReference type="Gene3D" id="1.10.287.1060">
    <property type="entry name" value="ESAT-6-like"/>
    <property type="match status" value="1"/>
</dbReference>
<dbReference type="InterPro" id="IPR020342">
    <property type="entry name" value="Phage_T4_Gp16_DNA-pack"/>
</dbReference>
<dbReference type="Pfam" id="PF11053">
    <property type="entry name" value="DNA_Packaging"/>
    <property type="match status" value="1"/>
</dbReference>
<sequence>MEGLDINKLLDISDLPGIDGEEIKVYEPLQLVEVKSNPQNRTPDLEDDYGVVRRNMHFQQQMLMDAAKIFLETAKNADSPRHMEVFATLMGQMTTTNREILKLHKDMKDITSEQVGTKGAVPTGQMNIQNATVFMGSPTELMDEIGDAYEAQEAREKVINGTTD</sequence>
<protein>
    <recommendedName>
        <fullName>Terminase, small subunit</fullName>
    </recommendedName>
    <alternativeName>
        <fullName>Gene product 16</fullName>
        <shortName>gp16</shortName>
    </alternativeName>
    <alternativeName>
        <fullName>Packaging protein Gp16</fullName>
    </alternativeName>
</protein>
<evidence type="ECO:0000269" key="1">
    <source>
    </source>
</evidence>
<evidence type="ECO:0000269" key="2">
    <source>
    </source>
</evidence>
<evidence type="ECO:0000269" key="3">
    <source>
    </source>
</evidence>
<evidence type="ECO:0000305" key="4">
    <source>
    </source>
</evidence>
<evidence type="ECO:0000305" key="5">
    <source>
    </source>
</evidence>
<evidence type="ECO:0000305" key="6">
    <source>
    </source>
</evidence>
<organismHost>
    <name type="scientific">Escherichia coli</name>
    <dbReference type="NCBI Taxonomy" id="562"/>
</organismHost>
<proteinExistence type="evidence at protein level"/>
<accession>P17311</accession>
<reference key="1">
    <citation type="journal article" date="1990" name="Nucleic Acids Res.">
        <title>Bacteriophage T4 DNA packaging genes 16 and 17.</title>
        <authorList>
            <person name="Powell D."/>
            <person name="Franklin J."/>
            <person name="Arisaka F."/>
            <person name="Mosig G."/>
        </authorList>
    </citation>
    <scope>NUCLEOTIDE SEQUENCE [GENOMIC DNA]</scope>
    <source>
        <strain>D</strain>
    </source>
</reference>
<reference key="2">
    <citation type="journal article" date="1997" name="J. Biol. Chem.">
        <title>Purification and characterization of the small subunit of phage T4 terminase, gp16, required for DNA packaging.</title>
        <authorList>
            <person name="Lin H."/>
            <person name="Simon M.N."/>
            <person name="Black L.W."/>
        </authorList>
    </citation>
    <scope>SUBUNIT</scope>
    <scope>FUNCTION</scope>
</reference>
<reference key="3">
    <citation type="journal article" date="2003" name="Microbiol. Mol. Biol. Rev.">
        <title>Bacteriophage T4 genome.</title>
        <authorList>
            <person name="Miller E.S."/>
            <person name="Kutter E."/>
            <person name="Mosig G."/>
            <person name="Arisaka F."/>
            <person name="Kunisawa T."/>
            <person name="Ruger W."/>
        </authorList>
    </citation>
    <scope>NUCLEOTIDE SEQUENCE [LARGE SCALE GENOMIC DNA]</scope>
</reference>
<reference key="4">
    <citation type="journal article" date="2002" name="Nucleic Acids Res.">
        <title>Sequence analysis of bacteriophage T4 DNA packaging/terminase genes 16 and 17 reveals a common ATPase center in the large subunit of viral terminases.</title>
        <authorList>
            <person name="Mitchell M.S."/>
            <person name="Matsuzaki S."/>
            <person name="Imai S."/>
            <person name="Rao V.B."/>
        </authorList>
    </citation>
    <scope>CHARACTERIZATION</scope>
</reference>
<reference key="5">
    <citation type="journal article" date="2003" name="J. Biol. Chem.">
        <title>Isolation and characterization of T4 bacteriophage gp17 terminase, a large subunit multimer with enhanced ATPase activity.</title>
        <authorList>
            <person name="Baumann R.G."/>
            <person name="Black L.W."/>
        </authorList>
    </citation>
    <scope>INTERACTION WITH GP17</scope>
</reference>
<reference key="6">
    <citation type="journal article" date="2009" name="J. Biol. Chem.">
        <title>The small terminase, gp16, of bacteriophage T4 is a regulator of the DNA packaging motor.</title>
        <authorList>
            <person name="Al-Zahrani A.S."/>
            <person name="Kondabagil K."/>
            <person name="Gao S."/>
            <person name="Kelly N."/>
            <person name="Ghosh-Kumar M."/>
            <person name="Rao V.B."/>
        </authorList>
    </citation>
    <scope>FUNCTION</scope>
</reference>
<reference key="7">
    <citation type="journal article" date="2021" name="Virology">
        <title>The coevolution of large and small terminases of bacteriophages is a result of purifying selection leading to phenotypic stabilization.</title>
        <authorList>
            <person name="Wangchuk J."/>
            <person name="Chatterjee A."/>
            <person name="Patil S."/>
            <person name="Madugula S.K."/>
            <person name="Kondabagil K."/>
        </authorList>
    </citation>
    <scope>DOMAIN</scope>
</reference>
<comment type="function">
    <text evidence="4 6">The terminase small subunit binds to the packaging initiation site and regulates the ATPase activity of the terminase large subunit. The terminase lies at a unique vertex of the procapsid and is composed of two subunits, a small terminase subunit involved in viral DNA recognition (packaging 'pac' sequence), and a large terminase subunit possessing endonucleolytic and ATPase activities (Probable). Both terminase subunits heterooligomerize and are docked on the portal protein to form the packaging machine. The terminase large subunit exhibits endonuclease activity and cleaves the viral genome concatemer once the capsid is full (headful packaging). Once the capsid is packaged with the DNA, the terminase complex is substituted by neck proteins.</text>
</comment>
<comment type="subunit">
    <text evidence="1 3">Homooctamer (Probable) (PubMed:9013596). Interacts with the terminase large subunit gp17; the active complex is probably heterooligomeric (PubMed:12466275).</text>
</comment>
<comment type="domain">
    <text evidence="5">The N-terminus contains a helix-turn-helix (HTH) doamin that is involved in viral DNA binding.</text>
</comment>
<keyword id="KW-0238">DNA-binding</keyword>
<keyword id="KW-1185">Reference proteome</keyword>
<keyword id="KW-0231">Viral genome packaging</keyword>
<keyword id="KW-1188">Viral release from host cell</keyword>
<gene>
    <name type="primary">16</name>
</gene>